<name>ADHN_RHOER</name>
<sequence>MKTKAAVLFETHKPFEIVELEL</sequence>
<accession>P81747</accession>
<keyword id="KW-0963">Cytoplasm</keyword>
<keyword id="KW-0903">Direct protein sequencing</keyword>
<keyword id="KW-0520">NAD</keyword>
<keyword id="KW-0560">Oxidoreductase</keyword>
<feature type="chain" id="PRO_0000064454" description="NDMA-dependent alcohol dehydrogenase">
    <location>
        <begin position="1"/>
        <end position="22" status="greater than"/>
    </location>
</feature>
<feature type="non-terminal residue">
    <location>
        <position position="22"/>
    </location>
</feature>
<reference key="1">
    <citation type="journal article" date="2000" name="Microbiology">
        <title>Nicotinoprotein (NADH-containing) alcohol dehydrogenase from Rhodococcus erythropolis DSM 1069: an efficient catalyst for coenzyme-independent oxidation of a broad spectrum of alcohols and the interconversion of alcohols and aldehydes.</title>
        <authorList>
            <person name="Schenkels P."/>
            <person name="Duine J.A."/>
        </authorList>
    </citation>
    <scope>PROTEIN SEQUENCE</scope>
    <scope>FUNCTION</scope>
    <scope>CATALYTIC ACTIVITY</scope>
    <scope>COFACTOR</scope>
    <scope>BIOPHYSICOCHEMICAL PROPERTIES</scope>
    <scope>SUBSTRATE SPECIFICITY</scope>
    <scope>SUBUNIT</scope>
    <source>
        <strain>DSM 1069</strain>
    </source>
</reference>
<comment type="function">
    <text evidence="1">This is a novel enzyme, catalytically different from common alcohol dehydrogenases. It is effective in oxidizing ethanol, other primary alcohols and benzylalcohol only in the presence of p-nitroso-N,N-dimethylaniline (NDMA) as an electron acceptor. NADH acts as a cofactor here instead of as a coenzyme.</text>
</comment>
<comment type="catalytic activity">
    <reaction evidence="1">
        <text>N,N-dimethyl-4-nitrosoaniline + a primary alcohol = 4-(hydroxylamino)-N,N-dimethylaniline + an aldehyde</text>
        <dbReference type="Rhea" id="RHEA:48076"/>
        <dbReference type="ChEBI" id="CHEBI:15734"/>
        <dbReference type="ChEBI" id="CHEBI:17478"/>
        <dbReference type="ChEBI" id="CHEBI:59990"/>
        <dbReference type="ChEBI" id="CHEBI:59991"/>
    </reaction>
</comment>
<comment type="catalytic activity">
    <reaction evidence="1">
        <text>ethanol + A = acetaldehyde + AH2</text>
        <dbReference type="Rhea" id="RHEA:33567"/>
        <dbReference type="ChEBI" id="CHEBI:13193"/>
        <dbReference type="ChEBI" id="CHEBI:15343"/>
        <dbReference type="ChEBI" id="CHEBI:16236"/>
        <dbReference type="ChEBI" id="CHEBI:17499"/>
        <dbReference type="EC" id="1.1.99.36"/>
    </reaction>
</comment>
<comment type="cofactor">
    <cofactor evidence="1">
        <name>NADH</name>
        <dbReference type="ChEBI" id="CHEBI:57945"/>
    </cofactor>
</comment>
<comment type="biophysicochemical properties">
    <kinetics>
        <KM evidence="1">0.1 mM for ethanol (when NDMA is the electron acceptor)</KM>
        <KM evidence="1">0.0037 mM for propan-1-ol (when NDMA is the electron acceptor)</KM>
        <KM evidence="1">0.01 mM for butan-1-ol (when NDMA is the electron acceptor)</KM>
        <KM evidence="1">0.0011 mM for heptan-1-ol (when NDMA is the electron acceptor)</KM>
        <KM evidence="1">0.059 mM for octan-1-ol (when NDMA is the electron acceptor)</KM>
        <KM evidence="1">0.028 mM for 2-propen-1-ol (when NDMA is the electron acceptor)</KM>
        <KM evidence="1">0.0072 mM for isobutanol (when NDMA is the electron acceptor)</KM>
        <KM evidence="1">0.0028 mM for 3-methylbutan-1-ol (when NDMA is the electron acceptor)</KM>
        <KM evidence="1">0.0018 mM for benzyl alcohol (when NDMA is the electron acceptor)</KM>
        <KM evidence="1">0.0047 mM for 4-hydroxybenzyl alcohol (when NDMA is the electron acceptor)</KM>
        <KM evidence="1">0.39 mM for vanillyl alcohol (when NDMA is the electron acceptor)</KM>
        <KM evidence="1">0.16 mM for veratryl alcohol (when NDMA is the electron acceptor)</KM>
        <KM evidence="1">0.007 mM for 2-phenylethanol (when NDMA is the electron acceptor)</KM>
        <KM evidence="1">0.056 mM for 2-phenylpropan-1-ol (when NDMA is the electron acceptor)</KM>
        <KM evidence="1">0.014 mM for 3-phenylpropan-1-ol (when NDMA is the electron acceptor)</KM>
        <KM evidence="1">0.0019 mM for 3-(4-hydroxyphenyl)propan-1-ol (when NDMA is the electron acceptor)</KM>
        <KM evidence="1">0.0036 mM for cinnamyl alcohol (when NDMA is the electron acceptor)</KM>
        <KM evidence="1">0.0055 mM for coniferyl alcohol (when NDMA is the electron acceptor)</KM>
        <KM evidence="1">0.2 mM for 2-phenylbutan-1-ol (when NDMA is the electron acceptor)</KM>
        <KM evidence="1">0.0059 mM for 4-(4-methoxyphenyl)butan-1-ol (when NDMA is the electron acceptor)</KM>
        <KM evidence="1">6 mM for propan-2-ol (when NDMA is the electron acceptor)</KM>
        <KM evidence="1">4.1 mM for butan-2-ol (when NDMA is the electron acceptor)</KM>
        <KM evidence="1">1.3 mM for pentan-2-ol (when NDMA is the electron acceptor)</KM>
        <KM evidence="1">0.83 mM for hexan-2-ol (when NDMA is the electron acceptor)</KM>
        <KM evidence="1">0.07 mM for heptan-2-ol (when NDMA is the electron acceptor)</KM>
        <KM evidence="1">0.12 mM for octan-2-ol (when NDMA is the electron acceptor)</KM>
        <KM evidence="1">9.1 mM for 3-methylheptan-4-ol (when NDMA is the electron acceptor)</KM>
        <KM evidence="1">0.28 mM for 4-methylheptan-3-ol (when NDMA is the electron acceptor)</KM>
        <KM evidence="1">2.8 mM for 1-phenylethanol (when NDMA is the electron acceptor)</KM>
        <KM evidence="1">0.55 mM for 1-phenylpropan-1-ol (when NDMA is the electron acceptor)</KM>
        <KM evidence="1">1.6 mM for 1-phenylpropan-2-ol (when NDMA is the electron acceptor)</KM>
        <KM evidence="1">0.55 mM for 1-phenylbutan-2-ol (when NDMA is the electron acceptor)</KM>
        <KM evidence="1">0.19 mM for cyclohexanol (when NDMA is the electron acceptor)</KM>
        <KM evidence="1">35 mM for propane-1,2-diol (when NDMA is the electron acceptor)</KM>
        <KM evidence="1">4.1 mM for propane-1,3-diol (when NDMA is the electron acceptor)</KM>
        <KM evidence="1">8.3 mM for 3-butene-1,2-diol (when NDMA is the electron acceptor)</KM>
        <KM evidence="1">0.2 mM for pentane-1,2-diol (when NDMA is the electron acceptor)</KM>
        <KM evidence="1">3.1 mM for 1-phenylethane-1,2-diol (when NDMA is the electron acceptor)</KM>
        <KM evidence="1">0.93 mM for formaldehyde (when NDMA is the electron acceptor)</KM>
        <KM evidence="1">4.95 mM for acetaldehyde (when veratryl alcohol is the electron donor)</KM>
        <KM evidence="1">0.083 mM for benzaldehyde (when veratryl alcohol is the electron donor)</KM>
        <KM evidence="1">0.088 mM for 2-phenylpropionaldehyde (when veratryl alcohol is the electron donor)</KM>
        <KM evidence="1">0.14 mM for 3-phenylpropionaldehyde (when veratryl alcohol is the electron donor)</KM>
        <KM evidence="1">0.12 mM for 3-phenylbutyraldehyde (when veratryl alcohol is the electron donor)</KM>
        <KM evidence="1">242 mM for glyoxal (when veratryl alcohol is the electron donor)</KM>
        <KM evidence="1">3.2 mM for methylglyoxal (when veratryl alcohol is the electron donor)</KM>
        <KM evidence="1">0.21 mM for phenylglyoxal (when veratryl alcohol is the electron donor)</KM>
        <KM evidence="1">38 mM for hydroxyacetone (when veratryl alcohol is the electron donor)</KM>
        <KM evidence="1">1.6 mM for cyclohexanone (when veratryl alcohol is the electron donor)</KM>
        <KM evidence="1">0.0041 mM for NDMA (when veratryl alcohol is the electron donor)</KM>
        <Vmax evidence="1">2.0 umol/min/mg enzyme toward ethanol (when NDMA is the electron acceptor)</Vmax>
        <Vmax evidence="1">2.5 umol/min/mg enzyme toward propan-1-ol (when NDMA is the electron acceptor)</Vmax>
        <Vmax evidence="1">5.8 umol/min/mg enzyme toward butan-1-ol (when NDMA is the electron acceptor)</Vmax>
        <Vmax evidence="1">2.0 umol/min/mg enzyme toward pentan-1-ol (when NDMA is the electron acceptor)</Vmax>
        <Vmax evidence="1">2.2 umol/min/mg enzyme toward hexan-1-ol (when NDMA is the electron acceptor)</Vmax>
        <Vmax evidence="1">2.7 umol/min/mg enzyme toward heptan-1-ol (when NDMA is the electron acceptor)</Vmax>
        <Vmax evidence="1">3.5 umol/min/mg enzyme toward octan-1-ol (when NDMA is the electron acceptor)</Vmax>
        <Vmax evidence="1">3.0 umol/min/mg enzyme toward 2-propen-1-ol (when NDMA is the electron acceptor)</Vmax>
        <Vmax evidence="1">3.3 umol/min/mg enzyme toward isobutanol (when NDMA is the electron acceptor)</Vmax>
        <Vmax evidence="1">3.1 umol/min/mg enzyme toward 3-methylbutan-1-ol (when NDMA is the electron acceptor)</Vmax>
        <Vmax evidence="1">1.9 umol/min/mg enzyme toward citronellol (when NDMA is the electron acceptor)</Vmax>
        <Vmax evidence="1">4.9 umol/min/mg enzyme toward benzyl alcohol (when NDMA is the electron acceptor)</Vmax>
        <Vmax evidence="1">0.79 umol/min/mg enzyme toward 4-hydroxybenzyl alcohol (when NDMA is the electron acceptor)</Vmax>
        <Vmax evidence="1">2.0 umol/min/mg enzyme toward vanillyl alcohol (when NDMA is the electron acceptor)</Vmax>
        <Vmax evidence="1">1.8 umol/min/mg enzyme toward veratryl alcohol (when NDMA is the electron acceptor)</Vmax>
        <Vmax evidence="1">2.6 umol/min/mg enzyme toward 2-phenylethanol (when NDMA is the electron acceptor)</Vmax>
        <Vmax evidence="1">1.8 umol/min/mg enzyme toward 2-phenylpropan-1-ol (when NDMA is the electron acceptor)</Vmax>
        <Vmax evidence="1">2.4 umol/min/mg enzyme toward 3-phenylpropan-1-ol (when NDMA is the electron acceptor)</Vmax>
        <Vmax evidence="1">2.7 umol/min/mg enzyme toward 3-(4-hydroxyphenyl)propan-1-ol (when NDMA is the electron acceptor)</Vmax>
        <Vmax evidence="1">3.4 umol/min/mg enzyme toward cinnamyl alcohol (when NDMA is the electron acceptor)</Vmax>
        <Vmax evidence="1">0.92 umol/min/mg enzyme toward coniferyl alcohol (when NDMA is the electron acceptor)</Vmax>
        <Vmax evidence="1">1.3 umol/min/mg enzyme toward 2-phenylbutan-1-ol (when NDMA is the electron acceptor)</Vmax>
        <Vmax evidence="1">4.0 umol/min/mg enzyme toward 4-(4-methoxyphenyl)butan-1-ol (when NDMA is the electron acceptor)</Vmax>
        <Vmax evidence="1">0.16 umol/min/mg enzyme toward propan-2-ol (when NDMA is the electron acceptor)</Vmax>
        <Vmax evidence="1">0.81 umol/min/mg enzyme toward butan-2-ol (when NDMA is the electron acceptor)</Vmax>
        <Vmax evidence="1">2.0 umol/min/mg enzyme toward pentan-2-ol (when NDMA is the electron acceptor)</Vmax>
        <Vmax evidence="1">2.6 umol/min/mg enzyme toward hexan-2-ol (when NDMA is the electron acceptor)</Vmax>
        <Vmax evidence="1">1.1 umol/min/mg enzyme toward heptan-2-ol (when NDMA is the electron acceptor)</Vmax>
        <Vmax evidence="1">0.75 umol/min/mg enzyme toward octan-2-ol (when NDMA is the electron acceptor)</Vmax>
        <Vmax evidence="1">6.6 umol/min/mg enzyme toward 3-methylheptan-4-ol (when NDMA is the electron acceptor)</Vmax>
        <Vmax evidence="1">0.58 umol/min/mg enzyme toward 4-methylheptan-3-ol (when NDMA is the electron acceptor)</Vmax>
        <Vmax evidence="1">1.2 umol/min/mg enzyme toward 1-phenylethanol (when NDMA is the electron acceptor)</Vmax>
        <Vmax evidence="1">0.84 umol/min/mg enzyme toward 1-phenylpropan-1-ol (when NDMA is the electron acceptor)</Vmax>
        <Vmax evidence="1">1.9 umol/min/mg enzyme toward 1-phenylpropan-2-ol (when NDMA is the electron acceptor)</Vmax>
        <Vmax evidence="1">1.5 umol/min/mg enzyme toward 1-phenylbutan-2-ol (when NDMA is the electron acceptor)</Vmax>
        <Vmax evidence="1">1.9 umol/min/mg enzyme toward cyclohexanol (when NDMA is the electron acceptor)</Vmax>
        <Vmax evidence="1">2.3 umol/min/mg enzyme toward propane-1,2-diol (when NDMA is the electron acceptor)</Vmax>
        <Vmax evidence="1">3.0 umol/min/mg enzyme toward propane-1,3-diol (when NDMA is the electron acceptor)</Vmax>
        <Vmax evidence="1">1.6 umol/min/mg enzyme toward 3-butene-1,2-diol (when NDMA is the electron acceptor)</Vmax>
        <Vmax evidence="1">2.0 umol/min/mg enzyme toward pentane-1,2-diol (when NDMA is the electron acceptor)</Vmax>
        <Vmax evidence="1">1.4 umol/min/mg enzyme toward 1-phenylethane-1,2-diol (when NDMA is the electron acceptor)</Vmax>
        <Vmax evidence="1">3.4 umol/min/mg enzyme toward formaldehyde (when NDMA is the electron acceptor)</Vmax>
        <Vmax evidence="1">2.1 umol/min/mg enzyme toward acetaldehyde (when veratryl alcohol is the electron donor)</Vmax>
        <Vmax evidence="1">3.7 umol/min/mg enzyme toward benzaldehyde (when veratryl alcohol is the electron donor)</Vmax>
        <Vmax evidence="1">2.38 umol/min/mg enzyme toward 2-phenylpropionaldehyde (when veratryl alcohol is the electron donor)</Vmax>
        <Vmax evidence="1">8.32 umol/min/mg enzyme toward 3-phenylpropionaldehyde (when veratryl alcohol is the electron donor)</Vmax>
        <Vmax evidence="1">8.52 umol/min/mg enzyme toward 3-phenylbutyraldehyde (when veratryl alcohol is the electron donor)</Vmax>
        <Vmax evidence="1">1.0 umol/min/mg enzyme toward glyoxal (when veratryl alcohol is the electron donor)</Vmax>
        <Vmax evidence="1">4.5 umol/min/mg enzyme toward methylglyoxal (when veratryl alcohol is the electron donor)</Vmax>
        <Vmax evidence="1">5.1 umol/min/mg enzyme toward phenylglyoxal (when veratryl alcohol is the electron donor)</Vmax>
        <Vmax evidence="1">0.15 umol/min/mg enzyme toward hydroxyacetone (when veratryl alcohol is the electron donor)</Vmax>
        <Vmax evidence="1">0.097 umol/min/mg enzyme toward cyclohexanone (when veratryl alcohol is the electron donor)</Vmax>
        <Vmax evidence="1">1.7 umol/min/mg enzyme toward NDMA (when veratryl alcohol is the electron donor)</Vmax>
        <text>The lower limit of the determination of KM with NDMA as electron acceptor was 0.001 mM. KM was even lower for hexan-1-ol, pentan-1-ol, and citronellol.</text>
    </kinetics>
    <phDependence>
        <text evidence="1">Optimum pH is 7.0.</text>
    </phDependence>
</comment>
<comment type="subunit">
    <text evidence="1">Homotetramer.</text>
</comment>
<comment type="subcellular location">
    <subcellularLocation>
        <location>Cytoplasm</location>
    </subcellularLocation>
</comment>
<comment type="similarity">
    <text evidence="3">Belongs to the zinc-containing alcohol dehydrogenase family.</text>
</comment>
<evidence type="ECO:0000269" key="1">
    <source>
    </source>
</evidence>
<evidence type="ECO:0000303" key="2">
    <source>
    </source>
</evidence>
<evidence type="ECO:0000305" key="3"/>
<dbReference type="EC" id="1.1.99.36" evidence="1"/>
<dbReference type="STRING" id="1833.XU06_08975"/>
<dbReference type="SABIO-RK" id="P81747"/>
<dbReference type="GO" id="GO:0005737">
    <property type="term" value="C:cytoplasm"/>
    <property type="evidence" value="ECO:0007669"/>
    <property type="project" value="UniProtKB-SubCell"/>
</dbReference>
<dbReference type="GO" id="GO:0016491">
    <property type="term" value="F:oxidoreductase activity"/>
    <property type="evidence" value="ECO:0007669"/>
    <property type="project" value="UniProtKB-KW"/>
</dbReference>
<proteinExistence type="evidence at protein level"/>
<organism>
    <name type="scientific">Rhodococcus erythropolis</name>
    <name type="common">Arthrobacter picolinophilus</name>
    <dbReference type="NCBI Taxonomy" id="1833"/>
    <lineage>
        <taxon>Bacteria</taxon>
        <taxon>Bacillati</taxon>
        <taxon>Actinomycetota</taxon>
        <taxon>Actinomycetes</taxon>
        <taxon>Mycobacteriales</taxon>
        <taxon>Nocardiaceae</taxon>
        <taxon>Rhodococcus</taxon>
        <taxon>Rhodococcus erythropolis group</taxon>
    </lineage>
</organism>
<protein>
    <recommendedName>
        <fullName evidence="2">NDMA-dependent alcohol dehydrogenase</fullName>
        <shortName evidence="2">NDMA-ADH</shortName>
        <ecNumber evidence="1">1.1.99.36</ecNumber>
    </recommendedName>
    <alternativeName>
        <fullName evidence="2">Nicotinoprotein (NADH-containing) alcohol dehydrogenase</fullName>
    </alternativeName>
</protein>